<gene>
    <name type="primary">DMC1</name>
    <name type="synonym">ISC2</name>
    <name type="ordered locus">YER179W</name>
</gene>
<accession>P25453</accession>
<accession>D3DM88</accession>
<evidence type="ECO:0000250" key="1"/>
<evidence type="ECO:0000250" key="2">
    <source>
        <dbReference type="UniProtKB" id="Q14565"/>
    </source>
</evidence>
<evidence type="ECO:0000269" key="3">
    <source>
    </source>
</evidence>
<evidence type="ECO:0000269" key="4">
    <source>
    </source>
</evidence>
<evidence type="ECO:0000269" key="5">
    <source>
    </source>
</evidence>
<evidence type="ECO:0000305" key="6"/>
<evidence type="ECO:0007829" key="7">
    <source>
        <dbReference type="PDB" id="7EJ6"/>
    </source>
</evidence>
<proteinExistence type="evidence at protein level"/>
<comment type="function">
    <text evidence="3 5">Required for meiotic recombination, synaptonemal complex formation and cell cycle progression. Recruited to meiosis recombination hotspots by MEI5 and SAE3.</text>
</comment>
<comment type="subunit">
    <text evidence="1 3 4 5">Double stacked ring-shaped homooctamer (By similarity). Forms a ternary complex with MEI5 and SAE3. Interacts with RDH54.</text>
</comment>
<comment type="interaction">
    <interactant intactId="EBI-5955">
        <id>P25453</id>
    </interactant>
    <interactant intactId="EBI-10685">
        <id>P32489</id>
        <label>MEI5</label>
    </interactant>
    <organismsDiffer>false</organismsDiffer>
    <experiments>4</experiments>
</comment>
<comment type="subcellular location">
    <subcellularLocation>
        <location evidence="3">Nucleus</location>
    </subcellularLocation>
</comment>
<comment type="developmental stage">
    <text>Expressed 2.5 hours after induction of meiosis.</text>
</comment>
<comment type="similarity">
    <text evidence="6">Belongs to the RecA family. DMC1 subfamily.</text>
</comment>
<protein>
    <recommendedName>
        <fullName>Meiotic recombination protein DMC1</fullName>
    </recommendedName>
</protein>
<name>DMC1_YEAST</name>
<keyword id="KW-0002">3D-structure</keyword>
<keyword id="KW-0067">ATP-binding</keyword>
<keyword id="KW-0131">Cell cycle</keyword>
<keyword id="KW-0238">DNA-binding</keyword>
<keyword id="KW-0469">Meiosis</keyword>
<keyword id="KW-0547">Nucleotide-binding</keyword>
<keyword id="KW-0539">Nucleus</keyword>
<keyword id="KW-1185">Reference proteome</keyword>
<keyword id="KW-0749">Sporulation</keyword>
<feature type="chain" id="PRO_0000122915" description="Meiotic recombination protein DMC1">
    <location>
        <begin position="1"/>
        <end position="334"/>
    </location>
</feature>
<feature type="binding site" evidence="6">
    <location>
        <begin position="121"/>
        <end position="128"/>
    </location>
    <ligand>
        <name>ATP</name>
        <dbReference type="ChEBI" id="CHEBI:30616"/>
    </ligand>
</feature>
<feature type="binding site" evidence="2">
    <location>
        <position position="223"/>
    </location>
    <ligand>
        <name>dsDNA</name>
        <dbReference type="ChEBI" id="CHEBI:4705"/>
    </ligand>
</feature>
<feature type="binding site" evidence="2">
    <location>
        <position position="223"/>
    </location>
    <ligand>
        <name>ssDNA</name>
        <dbReference type="ChEBI" id="CHEBI:9160"/>
    </ligand>
</feature>
<feature type="binding site" evidence="2">
    <location>
        <position position="226"/>
    </location>
    <ligand>
        <name>ssDNA</name>
        <dbReference type="ChEBI" id="CHEBI:9160"/>
    </ligand>
</feature>
<feature type="binding site" evidence="2">
    <location>
        <position position="229"/>
    </location>
    <ligand>
        <name>dsDNA</name>
        <dbReference type="ChEBI" id="CHEBI:4705"/>
    </ligand>
</feature>
<feature type="binding site" evidence="2">
    <location>
        <position position="229"/>
    </location>
    <ligand>
        <name>ssDNA</name>
        <dbReference type="ChEBI" id="CHEBI:9160"/>
    </ligand>
</feature>
<feature type="binding site" evidence="2">
    <location>
        <position position="235"/>
    </location>
    <ligand>
        <name>dsDNA</name>
        <dbReference type="ChEBI" id="CHEBI:4705"/>
    </ligand>
</feature>
<feature type="binding site" evidence="2">
    <location>
        <position position="235"/>
    </location>
    <ligand>
        <name>ssDNA</name>
        <dbReference type="ChEBI" id="CHEBI:9160"/>
    </ligand>
</feature>
<feature type="binding site" evidence="2">
    <location>
        <position position="305"/>
    </location>
    <ligand>
        <name>ssDNA</name>
        <dbReference type="ChEBI" id="CHEBI:9160"/>
    </ligand>
</feature>
<feature type="mutagenesis site" description="Recessive mutant; phenotypically null. Eliminates the ability for self-association." evidence="5">
    <original>K</original>
    <variation>E</variation>
    <location>
        <position position="69"/>
    </location>
</feature>
<feature type="mutagenesis site" description="Dominant mutant; phenotypically null." evidence="5">
    <original>G</original>
    <variation>D</variation>
    <location>
        <position position="126"/>
    </location>
</feature>
<feature type="strand" evidence="7">
    <location>
        <begin position="18"/>
        <end position="20"/>
    </location>
</feature>
<feature type="helix" evidence="7">
    <location>
        <begin position="21"/>
        <end position="24"/>
    </location>
</feature>
<feature type="helix" evidence="7">
    <location>
        <begin position="31"/>
        <end position="37"/>
    </location>
</feature>
<feature type="helix" evidence="7">
    <location>
        <begin position="44"/>
        <end position="47"/>
    </location>
</feature>
<feature type="helix" evidence="7">
    <location>
        <begin position="51"/>
        <end position="54"/>
    </location>
</feature>
<feature type="strand" evidence="7">
    <location>
        <begin position="57"/>
        <end position="59"/>
    </location>
</feature>
<feature type="helix" evidence="7">
    <location>
        <begin position="62"/>
        <end position="75"/>
    </location>
</feature>
<feature type="helix" evidence="7">
    <location>
        <begin position="84"/>
        <end position="89"/>
    </location>
</feature>
<feature type="helix" evidence="7">
    <location>
        <begin position="90"/>
        <end position="92"/>
    </location>
</feature>
<feature type="helix" evidence="7">
    <location>
        <begin position="101"/>
        <end position="107"/>
    </location>
</feature>
<feature type="strand" evidence="7">
    <location>
        <begin position="109"/>
        <end position="111"/>
    </location>
</feature>
<feature type="strand" evidence="7">
    <location>
        <begin position="113"/>
        <end position="122"/>
    </location>
</feature>
<feature type="helix" evidence="7">
    <location>
        <begin position="127"/>
        <end position="136"/>
    </location>
</feature>
<feature type="helix" evidence="7">
    <location>
        <begin position="142"/>
        <end position="144"/>
    </location>
</feature>
<feature type="strand" evidence="7">
    <location>
        <begin position="150"/>
        <end position="157"/>
    </location>
</feature>
<feature type="helix" evidence="7">
    <location>
        <begin position="162"/>
        <end position="170"/>
    </location>
</feature>
<feature type="turn" evidence="7">
    <location>
        <begin position="171"/>
        <end position="173"/>
    </location>
</feature>
<feature type="helix" evidence="7">
    <location>
        <begin position="176"/>
        <end position="180"/>
    </location>
</feature>
<feature type="strand" evidence="7">
    <location>
        <begin position="182"/>
        <end position="187"/>
    </location>
</feature>
<feature type="helix" evidence="7">
    <location>
        <begin position="191"/>
        <end position="204"/>
    </location>
</feature>
<feature type="strand" evidence="7">
    <location>
        <begin position="210"/>
        <end position="216"/>
    </location>
</feature>
<feature type="turn" evidence="7">
    <location>
        <begin position="217"/>
        <end position="219"/>
    </location>
</feature>
<feature type="helix" evidence="7">
    <location>
        <begin position="220"/>
        <end position="225"/>
    </location>
</feature>
<feature type="strand" evidence="7">
    <location>
        <begin position="228"/>
        <end position="231"/>
    </location>
</feature>
<feature type="helix" evidence="7">
    <location>
        <begin position="232"/>
        <end position="252"/>
    </location>
</feature>
<feature type="strand" evidence="7">
    <location>
        <begin position="256"/>
        <end position="261"/>
    </location>
</feature>
<feature type="strand" evidence="7">
    <location>
        <begin position="272"/>
        <end position="274"/>
    </location>
</feature>
<feature type="strand" evidence="7">
    <location>
        <begin position="278"/>
        <end position="283"/>
    </location>
</feature>
<feature type="helix" evidence="7">
    <location>
        <begin position="284"/>
        <end position="290"/>
    </location>
</feature>
<feature type="strand" evidence="7">
    <location>
        <begin position="292"/>
        <end position="299"/>
    </location>
</feature>
<feature type="strand" evidence="7">
    <location>
        <begin position="304"/>
        <end position="311"/>
    </location>
</feature>
<feature type="strand" evidence="7">
    <location>
        <begin position="313"/>
        <end position="315"/>
    </location>
</feature>
<feature type="strand" evidence="7">
    <location>
        <begin position="318"/>
        <end position="324"/>
    </location>
</feature>
<feature type="strand" evidence="7">
    <location>
        <begin position="326"/>
        <end position="330"/>
    </location>
</feature>
<organism>
    <name type="scientific">Saccharomyces cerevisiae (strain ATCC 204508 / S288c)</name>
    <name type="common">Baker's yeast</name>
    <dbReference type="NCBI Taxonomy" id="559292"/>
    <lineage>
        <taxon>Eukaryota</taxon>
        <taxon>Fungi</taxon>
        <taxon>Dikarya</taxon>
        <taxon>Ascomycota</taxon>
        <taxon>Saccharomycotina</taxon>
        <taxon>Saccharomycetes</taxon>
        <taxon>Saccharomycetales</taxon>
        <taxon>Saccharomycetaceae</taxon>
        <taxon>Saccharomyces</taxon>
    </lineage>
</organism>
<sequence>MSVTGTEIDSDTAKNILSVDELQNYGINASDLQKLKSGGIYTVNTVLSTTRRHLCKIKGLSEVKVEKIKEAAGKIIQVGFIPATVQLDIRQRVYSLSTGSKQLDSILGGGIMTMSITEVFGEFRCGKTQMSHTLCVTTQLPREMGGGEGKVAYIDTEGTFRPERIKQIAEGYELDPESCLANVSYARALNSEHQMELVEQLGEELSSGDYRLIVVDSIMANFRVDYCGRGELSERQQKLNQHLFKLNRLAEEFNVAVFLTNQVQSDPGASALFASADGRKPIGGHVLAHASATRILLRKGRGDERVAKLQDSPDMPEKECVYVIGEKGITDSSD</sequence>
<dbReference type="EMBL" id="M87549">
    <property type="protein sequence ID" value="AAA34571.1"/>
    <property type="molecule type" value="Genomic_DNA"/>
</dbReference>
<dbReference type="EMBL" id="D10865">
    <property type="protein sequence ID" value="BAA01637.1"/>
    <property type="molecule type" value="Genomic_DNA"/>
</dbReference>
<dbReference type="EMBL" id="U18922">
    <property type="protein sequence ID" value="AAB64706.1"/>
    <property type="molecule type" value="Genomic_DNA"/>
</dbReference>
<dbReference type="EMBL" id="BK006939">
    <property type="protein sequence ID" value="DAA07842.1"/>
    <property type="molecule type" value="Genomic_DNA"/>
</dbReference>
<dbReference type="PIR" id="A38214">
    <property type="entry name" value="A38214"/>
</dbReference>
<dbReference type="RefSeq" id="NP_011106.1">
    <property type="nucleotide sequence ID" value="NM_001179069.1"/>
</dbReference>
<dbReference type="PDB" id="7EJ6">
    <property type="method" value="EM"/>
    <property type="resolution" value="3.21 A"/>
    <property type="chains" value="A/B/C=1-334"/>
</dbReference>
<dbReference type="PDB" id="7EJ7">
    <property type="method" value="EM"/>
    <property type="resolution" value="3.41 A"/>
    <property type="chains" value="A/B/C=1-334"/>
</dbReference>
<dbReference type="PDB" id="9D4N">
    <property type="method" value="EM"/>
    <property type="resolution" value="2.90 A"/>
    <property type="chains" value="A/B/C/D/E/F=1-334"/>
</dbReference>
<dbReference type="PDBsum" id="7EJ6"/>
<dbReference type="PDBsum" id="7EJ7"/>
<dbReference type="PDBsum" id="9D4N"/>
<dbReference type="EMDB" id="EMD-46565"/>
<dbReference type="SMR" id="P25453"/>
<dbReference type="BioGRID" id="36932">
    <property type="interactions" value="98"/>
</dbReference>
<dbReference type="DIP" id="DIP-110N"/>
<dbReference type="FunCoup" id="P25453">
    <property type="interactions" value="263"/>
</dbReference>
<dbReference type="IntAct" id="P25453">
    <property type="interactions" value="45"/>
</dbReference>
<dbReference type="MINT" id="P25453"/>
<dbReference type="STRING" id="4932.YER179W"/>
<dbReference type="iPTMnet" id="P25453"/>
<dbReference type="PaxDb" id="4932-YER179W"/>
<dbReference type="PeptideAtlas" id="P25453"/>
<dbReference type="TopDownProteomics" id="P25453"/>
<dbReference type="EnsemblFungi" id="YER179W_mRNA">
    <property type="protein sequence ID" value="YER179W"/>
    <property type="gene ID" value="YER179W"/>
</dbReference>
<dbReference type="GeneID" id="856926"/>
<dbReference type="KEGG" id="sce:YER179W"/>
<dbReference type="AGR" id="SGD:S000000981"/>
<dbReference type="SGD" id="S000000981">
    <property type="gene designation" value="DMC1"/>
</dbReference>
<dbReference type="VEuPathDB" id="FungiDB:YER179W"/>
<dbReference type="eggNOG" id="KOG1434">
    <property type="taxonomic scope" value="Eukaryota"/>
</dbReference>
<dbReference type="GeneTree" id="ENSGT00760000119398"/>
<dbReference type="HOGENOM" id="CLU_041732_0_0_1"/>
<dbReference type="InParanoid" id="P25453"/>
<dbReference type="OMA" id="ANPMKPV"/>
<dbReference type="OrthoDB" id="10251254at2759"/>
<dbReference type="BioCyc" id="YEAST:G3O-30337-MONOMER"/>
<dbReference type="BioGRID-ORCS" id="856926">
    <property type="hits" value="0 hits in 10 CRISPR screens"/>
</dbReference>
<dbReference type="PRO" id="PR:P25453"/>
<dbReference type="Proteomes" id="UP000002311">
    <property type="component" value="Chromosome V"/>
</dbReference>
<dbReference type="RNAct" id="P25453">
    <property type="molecule type" value="protein"/>
</dbReference>
<dbReference type="GO" id="GO:0000794">
    <property type="term" value="C:condensed nuclear chromosome"/>
    <property type="evidence" value="ECO:0000314"/>
    <property type="project" value="SGD"/>
</dbReference>
<dbReference type="GO" id="GO:0005634">
    <property type="term" value="C:nucleus"/>
    <property type="evidence" value="ECO:0000314"/>
    <property type="project" value="SGD"/>
</dbReference>
<dbReference type="GO" id="GO:0005524">
    <property type="term" value="F:ATP binding"/>
    <property type="evidence" value="ECO:0000250"/>
    <property type="project" value="UniProtKB"/>
</dbReference>
<dbReference type="GO" id="GO:0016887">
    <property type="term" value="F:ATP hydrolysis activity"/>
    <property type="evidence" value="ECO:0007669"/>
    <property type="project" value="InterPro"/>
</dbReference>
<dbReference type="GO" id="GO:0008094">
    <property type="term" value="F:ATP-dependent activity, acting on DNA"/>
    <property type="evidence" value="ECO:0000318"/>
    <property type="project" value="GO_Central"/>
</dbReference>
<dbReference type="GO" id="GO:0140664">
    <property type="term" value="F:ATP-dependent DNA damage sensor activity"/>
    <property type="evidence" value="ECO:0007669"/>
    <property type="project" value="InterPro"/>
</dbReference>
<dbReference type="GO" id="GO:0042030">
    <property type="term" value="F:ATPase inhibitor activity"/>
    <property type="evidence" value="ECO:0000314"/>
    <property type="project" value="SGD"/>
</dbReference>
<dbReference type="GO" id="GO:0000150">
    <property type="term" value="F:DNA strand exchange activity"/>
    <property type="evidence" value="ECO:0000314"/>
    <property type="project" value="SGD"/>
</dbReference>
<dbReference type="GO" id="GO:0003690">
    <property type="term" value="F:double-stranded DNA binding"/>
    <property type="evidence" value="ECO:0000314"/>
    <property type="project" value="SGD"/>
</dbReference>
<dbReference type="GO" id="GO:0003697">
    <property type="term" value="F:single-stranded DNA binding"/>
    <property type="evidence" value="ECO:0000314"/>
    <property type="project" value="SGD"/>
</dbReference>
<dbReference type="GO" id="GO:0070192">
    <property type="term" value="P:chromosome organization involved in meiotic cell cycle"/>
    <property type="evidence" value="ECO:0000318"/>
    <property type="project" value="GO_Central"/>
</dbReference>
<dbReference type="GO" id="GO:0000730">
    <property type="term" value="P:DNA recombinase assembly"/>
    <property type="evidence" value="ECO:0000318"/>
    <property type="project" value="GO_Central"/>
</dbReference>
<dbReference type="GO" id="GO:0042148">
    <property type="term" value="P:DNA strand invasion"/>
    <property type="evidence" value="ECO:0000318"/>
    <property type="project" value="GO_Central"/>
</dbReference>
<dbReference type="GO" id="GO:0051321">
    <property type="term" value="P:meiotic cell cycle"/>
    <property type="evidence" value="ECO:0000315"/>
    <property type="project" value="SGD"/>
</dbReference>
<dbReference type="GO" id="GO:0000709">
    <property type="term" value="P:meiotic joint molecule formation"/>
    <property type="evidence" value="ECO:0000315"/>
    <property type="project" value="SGD"/>
</dbReference>
<dbReference type="GO" id="GO:0006312">
    <property type="term" value="P:mitotic recombination"/>
    <property type="evidence" value="ECO:0000318"/>
    <property type="project" value="GO_Central"/>
</dbReference>
<dbReference type="GO" id="GO:0007131">
    <property type="term" value="P:reciprocal meiotic recombination"/>
    <property type="evidence" value="ECO:0000315"/>
    <property type="project" value="SGD"/>
</dbReference>
<dbReference type="GO" id="GO:0030435">
    <property type="term" value="P:sporulation resulting in formation of a cellular spore"/>
    <property type="evidence" value="ECO:0007669"/>
    <property type="project" value="UniProtKB-KW"/>
</dbReference>
<dbReference type="GO" id="GO:0007130">
    <property type="term" value="P:synaptonemal complex assembly"/>
    <property type="evidence" value="ECO:0000316"/>
    <property type="project" value="SGD"/>
</dbReference>
<dbReference type="FunFam" id="1.10.150.20:FF:000056">
    <property type="entry name" value="Meiotic recombination protein DMC1"/>
    <property type="match status" value="1"/>
</dbReference>
<dbReference type="FunFam" id="3.40.50.300:FF:000239">
    <property type="entry name" value="Meiotic recombination protein DMC1"/>
    <property type="match status" value="1"/>
</dbReference>
<dbReference type="Gene3D" id="1.10.150.20">
    <property type="entry name" value="5' to 3' exonuclease, C-terminal subdomain"/>
    <property type="match status" value="1"/>
</dbReference>
<dbReference type="Gene3D" id="3.40.50.300">
    <property type="entry name" value="P-loop containing nucleotide triphosphate hydrolases"/>
    <property type="match status" value="1"/>
</dbReference>
<dbReference type="InterPro" id="IPR003593">
    <property type="entry name" value="AAA+_ATPase"/>
</dbReference>
<dbReference type="InterPro" id="IPR011940">
    <property type="entry name" value="Dmc1"/>
</dbReference>
<dbReference type="InterPro" id="IPR013632">
    <property type="entry name" value="DNA_recomb/repair_Rad51_C"/>
</dbReference>
<dbReference type="InterPro" id="IPR016467">
    <property type="entry name" value="DNA_recomb/repair_RecA-like"/>
</dbReference>
<dbReference type="InterPro" id="IPR010995">
    <property type="entry name" value="DNA_repair_Rad51/TF_NusA_a-hlx"/>
</dbReference>
<dbReference type="InterPro" id="IPR027417">
    <property type="entry name" value="P-loop_NTPase"/>
</dbReference>
<dbReference type="InterPro" id="IPR020588">
    <property type="entry name" value="RecA_ATP-bd"/>
</dbReference>
<dbReference type="InterPro" id="IPR020587">
    <property type="entry name" value="RecA_monomer-monomer_interface"/>
</dbReference>
<dbReference type="NCBIfam" id="NF003301">
    <property type="entry name" value="PRK04301.1"/>
    <property type="match status" value="1"/>
</dbReference>
<dbReference type="NCBIfam" id="TIGR02238">
    <property type="entry name" value="recomb_DMC1"/>
    <property type="match status" value="1"/>
</dbReference>
<dbReference type="PANTHER" id="PTHR22942:SF30">
    <property type="entry name" value="MEIOTIC RECOMBINATION PROTEIN DMC1_LIM15 HOMOLOG"/>
    <property type="match status" value="1"/>
</dbReference>
<dbReference type="PANTHER" id="PTHR22942">
    <property type="entry name" value="RECA/RAD51/RADA DNA STRAND-PAIRING FAMILY MEMBER"/>
    <property type="match status" value="1"/>
</dbReference>
<dbReference type="Pfam" id="PF14520">
    <property type="entry name" value="HHH_5"/>
    <property type="match status" value="1"/>
</dbReference>
<dbReference type="Pfam" id="PF08423">
    <property type="entry name" value="Rad51"/>
    <property type="match status" value="1"/>
</dbReference>
<dbReference type="PIRSF" id="PIRSF005856">
    <property type="entry name" value="Rad51"/>
    <property type="match status" value="1"/>
</dbReference>
<dbReference type="SMART" id="SM00382">
    <property type="entry name" value="AAA"/>
    <property type="match status" value="1"/>
</dbReference>
<dbReference type="SUPFAM" id="SSF52540">
    <property type="entry name" value="P-loop containing nucleoside triphosphate hydrolases"/>
    <property type="match status" value="1"/>
</dbReference>
<dbReference type="SUPFAM" id="SSF47794">
    <property type="entry name" value="Rad51 N-terminal domain-like"/>
    <property type="match status" value="1"/>
</dbReference>
<dbReference type="PROSITE" id="PS50162">
    <property type="entry name" value="RECA_2"/>
    <property type="match status" value="1"/>
</dbReference>
<dbReference type="PROSITE" id="PS50163">
    <property type="entry name" value="RECA_3"/>
    <property type="match status" value="1"/>
</dbReference>
<reference key="1">
    <citation type="journal article" date="1992" name="Cell">
        <title>DMC1: a meiosis-specific yeast homolog of E. coli recA required for recombination, synaptonemal complex formation, and cell cycle progression.</title>
        <authorList>
            <person name="Bishop D.K."/>
            <person name="Park D."/>
            <person name="Xu L."/>
            <person name="Kleckner N."/>
        </authorList>
    </citation>
    <scope>NUCLEOTIDE SEQUENCE [GENOMIC DNA]</scope>
    <source>
        <strain>SK1</strain>
    </source>
</reference>
<reference key="2">
    <citation type="journal article" date="1993" name="Mol. Gen. Genet.">
        <title>Isolation and characterization of a yeast gene that is homologous with a meiosis-specific cDNA from a plant.</title>
        <authorList>
            <person name="Kobayashi T."/>
            <person name="Hotta Y."/>
            <person name="Tabata S."/>
        </authorList>
    </citation>
    <scope>NUCLEOTIDE SEQUENCE [GENOMIC DNA]</scope>
    <source>
        <strain>SK1</strain>
    </source>
</reference>
<reference key="3">
    <citation type="journal article" date="1997" name="Nature">
        <title>The nucleotide sequence of Saccharomyces cerevisiae chromosome V.</title>
        <authorList>
            <person name="Dietrich F.S."/>
            <person name="Mulligan J.T."/>
            <person name="Hennessy K.M."/>
            <person name="Yelton M.A."/>
            <person name="Allen E."/>
            <person name="Araujo R."/>
            <person name="Aviles E."/>
            <person name="Berno A."/>
            <person name="Brennan T."/>
            <person name="Carpenter J."/>
            <person name="Chen E."/>
            <person name="Cherry J.M."/>
            <person name="Chung E."/>
            <person name="Duncan M."/>
            <person name="Guzman E."/>
            <person name="Hartzell G."/>
            <person name="Hunicke-Smith S."/>
            <person name="Hyman R.W."/>
            <person name="Kayser A."/>
            <person name="Komp C."/>
            <person name="Lashkari D."/>
            <person name="Lew H."/>
            <person name="Lin D."/>
            <person name="Mosedale D."/>
            <person name="Nakahara K."/>
            <person name="Namath A."/>
            <person name="Norgren R."/>
            <person name="Oefner P."/>
            <person name="Oh C."/>
            <person name="Petel F.X."/>
            <person name="Roberts D."/>
            <person name="Sehl P."/>
            <person name="Schramm S."/>
            <person name="Shogren T."/>
            <person name="Smith V."/>
            <person name="Taylor P."/>
            <person name="Wei Y."/>
            <person name="Botstein D."/>
            <person name="Davis R.W."/>
        </authorList>
    </citation>
    <scope>NUCLEOTIDE SEQUENCE [LARGE SCALE GENOMIC DNA]</scope>
    <source>
        <strain>ATCC 204508 / S288c</strain>
    </source>
</reference>
<reference key="4">
    <citation type="journal article" date="2014" name="G3 (Bethesda)">
        <title>The reference genome sequence of Saccharomyces cerevisiae: Then and now.</title>
        <authorList>
            <person name="Engel S.R."/>
            <person name="Dietrich F.S."/>
            <person name="Fisk D.G."/>
            <person name="Binkley G."/>
            <person name="Balakrishnan R."/>
            <person name="Costanzo M.C."/>
            <person name="Dwight S.S."/>
            <person name="Hitz B.C."/>
            <person name="Karra K."/>
            <person name="Nash R.S."/>
            <person name="Weng S."/>
            <person name="Wong E.D."/>
            <person name="Lloyd P."/>
            <person name="Skrzypek M.S."/>
            <person name="Miyasato S.R."/>
            <person name="Simison M."/>
            <person name="Cherry J.M."/>
        </authorList>
    </citation>
    <scope>GENOME REANNOTATION</scope>
    <source>
        <strain>ATCC 204508 / S288c</strain>
    </source>
</reference>
<reference key="5">
    <citation type="journal article" date="1997" name="Genetics">
        <title>DMC1 functions in a Saccharomyces cerevisiae meiotic pathway that is largely independent of the RAD51 pathway.</title>
        <authorList>
            <person name="Dresser M.E."/>
            <person name="Ewing D.J."/>
            <person name="Conrad M.N."/>
            <person name="Dominguez A.M."/>
            <person name="Barstead R."/>
            <person name="Jiang H."/>
            <person name="Kodadek T."/>
        </authorList>
    </citation>
    <scope>FUNCTION</scope>
    <scope>INTERACTION WITH RDH54</scope>
    <scope>MUTAGENESIS OF LYS-69 AND GLY-126</scope>
</reference>
<reference key="6">
    <citation type="journal article" date="2004" name="Cell">
        <title>A protein complex containing Mei5 and Sae3 promotes the assembly of the meiosis-specific RecA homolog Dmc1.</title>
        <authorList>
            <person name="Hayase A."/>
            <person name="Takagi M."/>
            <person name="Miyazaki T."/>
            <person name="Oshiumi H."/>
            <person name="Shinohara M."/>
            <person name="Shinohara A."/>
        </authorList>
    </citation>
    <scope>FUNCTION</scope>
    <scope>SUBCELLULAR LOCATION</scope>
    <scope>INTERACTION WITH MEI5 AND SAE3</scope>
</reference>
<reference key="7">
    <citation type="journal article" date="2005" name="Biochemistry">
        <title>Molecular visualization of the yeast Dmc1 protein ring and Dmc1-ssDNA nucleoprotein complex.</title>
        <authorList>
            <person name="Chang Y.-C."/>
            <person name="Lo Y.-H."/>
            <person name="Lee M.-H."/>
            <person name="Leng C.-H."/>
            <person name="Hu S.-M."/>
            <person name="Chang C.-S."/>
            <person name="Wang T.-F."/>
        </authorList>
    </citation>
    <scope>SUBUNIT</scope>
</reference>